<feature type="chain" id="PRO_1000121508" description="Large ribosomal subunit protein bL12">
    <location>
        <begin position="1"/>
        <end position="124"/>
    </location>
</feature>
<gene>
    <name evidence="1" type="primary">rplL</name>
    <name type="ordered locus">Xaut_3363</name>
</gene>
<proteinExistence type="inferred from homology"/>
<sequence length="124" mass="12761">MADLTKLVDELSSLTVLEAAELAKLLEEKWGVSAAAAVAVAAAPAGAAAAAVEEQTEFTVVLAAAGEKKIEVIKEVRAITGLGLKEAKDLVEGAPKPVKEAVSKDEAEKLKAQLEKAGAKVELK</sequence>
<dbReference type="EMBL" id="CP000781">
    <property type="protein sequence ID" value="ABS68592.1"/>
    <property type="molecule type" value="Genomic_DNA"/>
</dbReference>
<dbReference type="SMR" id="A7IKP9"/>
<dbReference type="STRING" id="78245.Xaut_3363"/>
<dbReference type="KEGG" id="xau:Xaut_3363"/>
<dbReference type="eggNOG" id="COG0222">
    <property type="taxonomic scope" value="Bacteria"/>
</dbReference>
<dbReference type="HOGENOM" id="CLU_086499_3_0_5"/>
<dbReference type="OrthoDB" id="9811748at2"/>
<dbReference type="PhylomeDB" id="A7IKP9"/>
<dbReference type="Proteomes" id="UP000002417">
    <property type="component" value="Chromosome"/>
</dbReference>
<dbReference type="GO" id="GO:0022625">
    <property type="term" value="C:cytosolic large ribosomal subunit"/>
    <property type="evidence" value="ECO:0007669"/>
    <property type="project" value="TreeGrafter"/>
</dbReference>
<dbReference type="GO" id="GO:0003729">
    <property type="term" value="F:mRNA binding"/>
    <property type="evidence" value="ECO:0007669"/>
    <property type="project" value="TreeGrafter"/>
</dbReference>
<dbReference type="GO" id="GO:0003735">
    <property type="term" value="F:structural constituent of ribosome"/>
    <property type="evidence" value="ECO:0007669"/>
    <property type="project" value="InterPro"/>
</dbReference>
<dbReference type="GO" id="GO:0006412">
    <property type="term" value="P:translation"/>
    <property type="evidence" value="ECO:0007669"/>
    <property type="project" value="UniProtKB-UniRule"/>
</dbReference>
<dbReference type="CDD" id="cd00387">
    <property type="entry name" value="Ribosomal_L7_L12"/>
    <property type="match status" value="1"/>
</dbReference>
<dbReference type="FunFam" id="3.30.1390.10:FF:000001">
    <property type="entry name" value="50S ribosomal protein L7/L12"/>
    <property type="match status" value="1"/>
</dbReference>
<dbReference type="Gene3D" id="3.30.1390.10">
    <property type="match status" value="1"/>
</dbReference>
<dbReference type="Gene3D" id="1.20.5.710">
    <property type="entry name" value="Single helix bin"/>
    <property type="match status" value="1"/>
</dbReference>
<dbReference type="HAMAP" id="MF_00368">
    <property type="entry name" value="Ribosomal_bL12"/>
    <property type="match status" value="1"/>
</dbReference>
<dbReference type="InterPro" id="IPR000206">
    <property type="entry name" value="Ribosomal_bL12"/>
</dbReference>
<dbReference type="InterPro" id="IPR013823">
    <property type="entry name" value="Ribosomal_bL12_C"/>
</dbReference>
<dbReference type="InterPro" id="IPR014719">
    <property type="entry name" value="Ribosomal_bL12_C/ClpS-like"/>
</dbReference>
<dbReference type="InterPro" id="IPR008932">
    <property type="entry name" value="Ribosomal_bL12_oligo"/>
</dbReference>
<dbReference type="InterPro" id="IPR036235">
    <property type="entry name" value="Ribosomal_bL12_oligo_N_sf"/>
</dbReference>
<dbReference type="NCBIfam" id="TIGR00855">
    <property type="entry name" value="L12"/>
    <property type="match status" value="1"/>
</dbReference>
<dbReference type="PANTHER" id="PTHR45987">
    <property type="entry name" value="39S RIBOSOMAL PROTEIN L12"/>
    <property type="match status" value="1"/>
</dbReference>
<dbReference type="PANTHER" id="PTHR45987:SF4">
    <property type="entry name" value="LARGE RIBOSOMAL SUBUNIT PROTEIN BL12M"/>
    <property type="match status" value="1"/>
</dbReference>
<dbReference type="Pfam" id="PF00542">
    <property type="entry name" value="Ribosomal_L12"/>
    <property type="match status" value="1"/>
</dbReference>
<dbReference type="Pfam" id="PF16320">
    <property type="entry name" value="Ribosomal_L12_N"/>
    <property type="match status" value="1"/>
</dbReference>
<dbReference type="SUPFAM" id="SSF54736">
    <property type="entry name" value="ClpS-like"/>
    <property type="match status" value="1"/>
</dbReference>
<dbReference type="SUPFAM" id="SSF48300">
    <property type="entry name" value="Ribosomal protein L7/12, oligomerisation (N-terminal) domain"/>
    <property type="match status" value="1"/>
</dbReference>
<evidence type="ECO:0000255" key="1">
    <source>
        <dbReference type="HAMAP-Rule" id="MF_00368"/>
    </source>
</evidence>
<evidence type="ECO:0000305" key="2"/>
<protein>
    <recommendedName>
        <fullName evidence="1">Large ribosomal subunit protein bL12</fullName>
    </recommendedName>
    <alternativeName>
        <fullName evidence="2">50S ribosomal protein L7/L12</fullName>
    </alternativeName>
</protein>
<reference key="1">
    <citation type="submission" date="2007-07" db="EMBL/GenBank/DDBJ databases">
        <title>Complete sequence of chromosome of Xanthobacter autotrophicus Py2.</title>
        <authorList>
            <consortium name="US DOE Joint Genome Institute"/>
            <person name="Copeland A."/>
            <person name="Lucas S."/>
            <person name="Lapidus A."/>
            <person name="Barry K."/>
            <person name="Glavina del Rio T."/>
            <person name="Hammon N."/>
            <person name="Israni S."/>
            <person name="Dalin E."/>
            <person name="Tice H."/>
            <person name="Pitluck S."/>
            <person name="Sims D."/>
            <person name="Brettin T."/>
            <person name="Bruce D."/>
            <person name="Detter J.C."/>
            <person name="Han C."/>
            <person name="Tapia R."/>
            <person name="Brainard J."/>
            <person name="Schmutz J."/>
            <person name="Larimer F."/>
            <person name="Land M."/>
            <person name="Hauser L."/>
            <person name="Kyrpides N."/>
            <person name="Kim E."/>
            <person name="Ensigns S.A."/>
            <person name="Richardson P."/>
        </authorList>
    </citation>
    <scope>NUCLEOTIDE SEQUENCE [LARGE SCALE GENOMIC DNA]</scope>
    <source>
        <strain>ATCC BAA-1158 / Py2</strain>
    </source>
</reference>
<organism>
    <name type="scientific">Xanthobacter autotrophicus (strain ATCC BAA-1158 / Py2)</name>
    <dbReference type="NCBI Taxonomy" id="78245"/>
    <lineage>
        <taxon>Bacteria</taxon>
        <taxon>Pseudomonadati</taxon>
        <taxon>Pseudomonadota</taxon>
        <taxon>Alphaproteobacteria</taxon>
        <taxon>Hyphomicrobiales</taxon>
        <taxon>Xanthobacteraceae</taxon>
        <taxon>Xanthobacter</taxon>
    </lineage>
</organism>
<comment type="function">
    <text evidence="1">Forms part of the ribosomal stalk which helps the ribosome interact with GTP-bound translation factors. Is thus essential for accurate translation.</text>
</comment>
<comment type="subunit">
    <text evidence="1">Homodimer. Part of the ribosomal stalk of the 50S ribosomal subunit. Forms a multimeric L10(L12)X complex, where L10 forms an elongated spine to which 2 to 4 L12 dimers bind in a sequential fashion. Binds GTP-bound translation factors.</text>
</comment>
<comment type="similarity">
    <text evidence="1">Belongs to the bacterial ribosomal protein bL12 family.</text>
</comment>
<keyword id="KW-1185">Reference proteome</keyword>
<keyword id="KW-0687">Ribonucleoprotein</keyword>
<keyword id="KW-0689">Ribosomal protein</keyword>
<name>RL7_XANP2</name>
<accession>A7IKP9</accession>